<name>PRMA_COLP3</name>
<protein>
    <recommendedName>
        <fullName evidence="1">Ribosomal protein L11 methyltransferase</fullName>
        <shortName evidence="1">L11 Mtase</shortName>
        <ecNumber evidence="1">2.1.1.-</ecNumber>
    </recommendedName>
</protein>
<feature type="chain" id="PRO_1000046016" description="Ribosomal protein L11 methyltransferase">
    <location>
        <begin position="1"/>
        <end position="293"/>
    </location>
</feature>
<feature type="binding site" evidence="1">
    <location>
        <position position="146"/>
    </location>
    <ligand>
        <name>S-adenosyl-L-methionine</name>
        <dbReference type="ChEBI" id="CHEBI:59789"/>
    </ligand>
</feature>
<feature type="binding site" evidence="1">
    <location>
        <position position="167"/>
    </location>
    <ligand>
        <name>S-adenosyl-L-methionine</name>
        <dbReference type="ChEBI" id="CHEBI:59789"/>
    </ligand>
</feature>
<feature type="binding site" evidence="1">
    <location>
        <position position="189"/>
    </location>
    <ligand>
        <name>S-adenosyl-L-methionine</name>
        <dbReference type="ChEBI" id="CHEBI:59789"/>
    </ligand>
</feature>
<feature type="binding site" evidence="1">
    <location>
        <position position="230"/>
    </location>
    <ligand>
        <name>S-adenosyl-L-methionine</name>
        <dbReference type="ChEBI" id="CHEBI:59789"/>
    </ligand>
</feature>
<reference key="1">
    <citation type="journal article" date="2005" name="Proc. Natl. Acad. Sci. U.S.A.">
        <title>The psychrophilic lifestyle as revealed by the genome sequence of Colwellia psychrerythraea 34H through genomic and proteomic analyses.</title>
        <authorList>
            <person name="Methe B.A."/>
            <person name="Nelson K.E."/>
            <person name="Deming J.W."/>
            <person name="Momen B."/>
            <person name="Melamud E."/>
            <person name="Zhang X."/>
            <person name="Moult J."/>
            <person name="Madupu R."/>
            <person name="Nelson W.C."/>
            <person name="Dodson R.J."/>
            <person name="Brinkac L.M."/>
            <person name="Daugherty S.C."/>
            <person name="Durkin A.S."/>
            <person name="DeBoy R.T."/>
            <person name="Kolonay J.F."/>
            <person name="Sullivan S.A."/>
            <person name="Zhou L."/>
            <person name="Davidsen T.M."/>
            <person name="Wu M."/>
            <person name="Huston A.L."/>
            <person name="Lewis M."/>
            <person name="Weaver B."/>
            <person name="Weidman J.F."/>
            <person name="Khouri H."/>
            <person name="Utterback T.R."/>
            <person name="Feldblyum T.V."/>
            <person name="Fraser C.M."/>
        </authorList>
    </citation>
    <scope>NUCLEOTIDE SEQUENCE [LARGE SCALE GENOMIC DNA]</scope>
    <source>
        <strain>34H / ATCC BAA-681</strain>
    </source>
</reference>
<comment type="function">
    <text evidence="1">Methylates ribosomal protein L11.</text>
</comment>
<comment type="catalytic activity">
    <reaction evidence="1">
        <text>L-lysyl-[protein] + 3 S-adenosyl-L-methionine = N(6),N(6),N(6)-trimethyl-L-lysyl-[protein] + 3 S-adenosyl-L-homocysteine + 3 H(+)</text>
        <dbReference type="Rhea" id="RHEA:54192"/>
        <dbReference type="Rhea" id="RHEA-COMP:9752"/>
        <dbReference type="Rhea" id="RHEA-COMP:13826"/>
        <dbReference type="ChEBI" id="CHEBI:15378"/>
        <dbReference type="ChEBI" id="CHEBI:29969"/>
        <dbReference type="ChEBI" id="CHEBI:57856"/>
        <dbReference type="ChEBI" id="CHEBI:59789"/>
        <dbReference type="ChEBI" id="CHEBI:61961"/>
    </reaction>
</comment>
<comment type="subcellular location">
    <subcellularLocation>
        <location evidence="1">Cytoplasm</location>
    </subcellularLocation>
</comment>
<comment type="similarity">
    <text evidence="1">Belongs to the methyltransferase superfamily. PrmA family.</text>
</comment>
<dbReference type="EC" id="2.1.1.-" evidence="1"/>
<dbReference type="EMBL" id="CP000083">
    <property type="protein sequence ID" value="AAZ28787.1"/>
    <property type="molecule type" value="Genomic_DNA"/>
</dbReference>
<dbReference type="RefSeq" id="WP_011041401.1">
    <property type="nucleotide sequence ID" value="NC_003910.7"/>
</dbReference>
<dbReference type="SMR" id="Q489G6"/>
<dbReference type="STRING" id="167879.CPS_0540"/>
<dbReference type="KEGG" id="cps:CPS_0540"/>
<dbReference type="eggNOG" id="COG2264">
    <property type="taxonomic scope" value="Bacteria"/>
</dbReference>
<dbReference type="HOGENOM" id="CLU_049382_4_1_6"/>
<dbReference type="Proteomes" id="UP000000547">
    <property type="component" value="Chromosome"/>
</dbReference>
<dbReference type="GO" id="GO:0005829">
    <property type="term" value="C:cytosol"/>
    <property type="evidence" value="ECO:0007669"/>
    <property type="project" value="TreeGrafter"/>
</dbReference>
<dbReference type="GO" id="GO:0016279">
    <property type="term" value="F:protein-lysine N-methyltransferase activity"/>
    <property type="evidence" value="ECO:0007669"/>
    <property type="project" value="TreeGrafter"/>
</dbReference>
<dbReference type="GO" id="GO:0032259">
    <property type="term" value="P:methylation"/>
    <property type="evidence" value="ECO:0007669"/>
    <property type="project" value="UniProtKB-KW"/>
</dbReference>
<dbReference type="CDD" id="cd02440">
    <property type="entry name" value="AdoMet_MTases"/>
    <property type="match status" value="1"/>
</dbReference>
<dbReference type="Gene3D" id="3.40.50.150">
    <property type="entry name" value="Vaccinia Virus protein VP39"/>
    <property type="match status" value="1"/>
</dbReference>
<dbReference type="HAMAP" id="MF_00735">
    <property type="entry name" value="Methyltr_PrmA"/>
    <property type="match status" value="1"/>
</dbReference>
<dbReference type="InterPro" id="IPR050078">
    <property type="entry name" value="Ribosomal_L11_MeTrfase_PrmA"/>
</dbReference>
<dbReference type="InterPro" id="IPR004498">
    <property type="entry name" value="Ribosomal_PrmA_MeTrfase"/>
</dbReference>
<dbReference type="InterPro" id="IPR029063">
    <property type="entry name" value="SAM-dependent_MTases_sf"/>
</dbReference>
<dbReference type="NCBIfam" id="TIGR00406">
    <property type="entry name" value="prmA"/>
    <property type="match status" value="1"/>
</dbReference>
<dbReference type="PANTHER" id="PTHR43648">
    <property type="entry name" value="ELECTRON TRANSFER FLAVOPROTEIN BETA SUBUNIT LYSINE METHYLTRANSFERASE"/>
    <property type="match status" value="1"/>
</dbReference>
<dbReference type="PANTHER" id="PTHR43648:SF1">
    <property type="entry name" value="ELECTRON TRANSFER FLAVOPROTEIN BETA SUBUNIT LYSINE METHYLTRANSFERASE"/>
    <property type="match status" value="1"/>
</dbReference>
<dbReference type="Pfam" id="PF06325">
    <property type="entry name" value="PrmA"/>
    <property type="match status" value="1"/>
</dbReference>
<dbReference type="PIRSF" id="PIRSF000401">
    <property type="entry name" value="RPL11_MTase"/>
    <property type="match status" value="1"/>
</dbReference>
<dbReference type="SUPFAM" id="SSF53335">
    <property type="entry name" value="S-adenosyl-L-methionine-dependent methyltransferases"/>
    <property type="match status" value="1"/>
</dbReference>
<accession>Q489G6</accession>
<proteinExistence type="inferred from homology"/>
<organism>
    <name type="scientific">Colwellia psychrerythraea (strain 34H / ATCC BAA-681)</name>
    <name type="common">Vibrio psychroerythus</name>
    <dbReference type="NCBI Taxonomy" id="167879"/>
    <lineage>
        <taxon>Bacteria</taxon>
        <taxon>Pseudomonadati</taxon>
        <taxon>Pseudomonadota</taxon>
        <taxon>Gammaproteobacteria</taxon>
        <taxon>Alteromonadales</taxon>
        <taxon>Colwelliaceae</taxon>
        <taxon>Colwellia</taxon>
    </lineage>
</organism>
<evidence type="ECO:0000255" key="1">
    <source>
        <dbReference type="HAMAP-Rule" id="MF_00735"/>
    </source>
</evidence>
<keyword id="KW-0963">Cytoplasm</keyword>
<keyword id="KW-0489">Methyltransferase</keyword>
<keyword id="KW-0949">S-adenosyl-L-methionine</keyword>
<keyword id="KW-0808">Transferase</keyword>
<sequence>MPWIQLRLSANEDNAEKYSDWLSACGSQAVTFIDAKDTPIYEPLPGDEVIYWSNTVVMGLFEASHDMDKVISYLQSIHPDKEQMRYKLEQLEDKDWEREWMDNFHPMKFGERLWVCPSWRDVPDPEAVNVMLDPGLAFGTGTHPTTALCLTWLDGLDLQDKTVVDFGCGSGILSLAALKLGAKKVIGIDIDPQALQASLANAERNNVSDRLELYLPKDQPEFKADVVVANILAGPLRELAPVIIEYVGDKGLLALSGVLEEQAQTLQTIYGQWCDMEPVSVQEEWVRLNGQRK</sequence>
<gene>
    <name evidence="1" type="primary">prmA</name>
    <name type="ordered locus">CPS_0540</name>
</gene>